<organism>
    <name type="scientific">Anaeromyxobacter dehalogenans (strain 2CP-C)</name>
    <dbReference type="NCBI Taxonomy" id="290397"/>
    <lineage>
        <taxon>Bacteria</taxon>
        <taxon>Pseudomonadati</taxon>
        <taxon>Myxococcota</taxon>
        <taxon>Myxococcia</taxon>
        <taxon>Myxococcales</taxon>
        <taxon>Cystobacterineae</taxon>
        <taxon>Anaeromyxobacteraceae</taxon>
        <taxon>Anaeromyxobacter</taxon>
    </lineage>
</organism>
<accession>Q2IMA5</accession>
<sequence>MSLVSAALFGLVQALTEFLPVSSTAHLLVFGELLGHSLDDRRFRAFVTIIQAGTTLAVLIYFRADIARLVAASTRGLVRGKPLGTPEARLGWYILLGTLPAALAGKLLERRIEALGNWVIAGSLVGLGLVLLAAERLASHRRRVEDVGPGDALLIGVAQALALVPGSSRSGTTITGGMLLGFTREAAARFSFLLSVPITLAAGAYKLWSTVPDLRGEVAWTVATVVGTVVSAVAGYLVIDWLLAWLRTRTTYVFVVWRIAAGAAIAALILSGVLPAGAEAPPPPPPALHAAP</sequence>
<gene>
    <name evidence="1" type="primary">uppP</name>
    <name type="ordered locus">Adeh_0157</name>
</gene>
<keyword id="KW-0046">Antibiotic resistance</keyword>
<keyword id="KW-0997">Cell inner membrane</keyword>
<keyword id="KW-1003">Cell membrane</keyword>
<keyword id="KW-0133">Cell shape</keyword>
<keyword id="KW-0961">Cell wall biogenesis/degradation</keyword>
<keyword id="KW-0378">Hydrolase</keyword>
<keyword id="KW-0472">Membrane</keyword>
<keyword id="KW-0573">Peptidoglycan synthesis</keyword>
<keyword id="KW-1185">Reference proteome</keyword>
<keyword id="KW-0812">Transmembrane</keyword>
<keyword id="KW-1133">Transmembrane helix</keyword>
<name>UPPP_ANADE</name>
<comment type="function">
    <text evidence="1">Catalyzes the dephosphorylation of undecaprenyl diphosphate (UPP). Confers resistance to bacitracin.</text>
</comment>
<comment type="catalytic activity">
    <reaction evidence="1">
        <text>di-trans,octa-cis-undecaprenyl diphosphate + H2O = di-trans,octa-cis-undecaprenyl phosphate + phosphate + H(+)</text>
        <dbReference type="Rhea" id="RHEA:28094"/>
        <dbReference type="ChEBI" id="CHEBI:15377"/>
        <dbReference type="ChEBI" id="CHEBI:15378"/>
        <dbReference type="ChEBI" id="CHEBI:43474"/>
        <dbReference type="ChEBI" id="CHEBI:58405"/>
        <dbReference type="ChEBI" id="CHEBI:60392"/>
        <dbReference type="EC" id="3.6.1.27"/>
    </reaction>
</comment>
<comment type="subcellular location">
    <subcellularLocation>
        <location evidence="1">Cell inner membrane</location>
        <topology evidence="1">Multi-pass membrane protein</topology>
    </subcellularLocation>
</comment>
<comment type="miscellaneous">
    <text>Bacitracin is thought to be involved in the inhibition of peptidoglycan synthesis by sequestering undecaprenyl diphosphate, thereby reducing the pool of lipid carrier available.</text>
</comment>
<comment type="similarity">
    <text evidence="1">Belongs to the UppP family.</text>
</comment>
<dbReference type="EC" id="3.6.1.27" evidence="1"/>
<dbReference type="EMBL" id="CP000251">
    <property type="protein sequence ID" value="ABC79934.1"/>
    <property type="molecule type" value="Genomic_DNA"/>
</dbReference>
<dbReference type="RefSeq" id="WP_011419217.1">
    <property type="nucleotide sequence ID" value="NC_007760.1"/>
</dbReference>
<dbReference type="SMR" id="Q2IMA5"/>
<dbReference type="STRING" id="290397.Adeh_0157"/>
<dbReference type="KEGG" id="ade:Adeh_0157"/>
<dbReference type="eggNOG" id="COG1968">
    <property type="taxonomic scope" value="Bacteria"/>
</dbReference>
<dbReference type="HOGENOM" id="CLU_060296_1_0_7"/>
<dbReference type="OrthoDB" id="9808289at2"/>
<dbReference type="Proteomes" id="UP000001935">
    <property type="component" value="Chromosome"/>
</dbReference>
<dbReference type="GO" id="GO:0005886">
    <property type="term" value="C:plasma membrane"/>
    <property type="evidence" value="ECO:0007669"/>
    <property type="project" value="UniProtKB-SubCell"/>
</dbReference>
<dbReference type="GO" id="GO:0050380">
    <property type="term" value="F:undecaprenyl-diphosphatase activity"/>
    <property type="evidence" value="ECO:0007669"/>
    <property type="project" value="UniProtKB-UniRule"/>
</dbReference>
<dbReference type="GO" id="GO:0071555">
    <property type="term" value="P:cell wall organization"/>
    <property type="evidence" value="ECO:0007669"/>
    <property type="project" value="UniProtKB-KW"/>
</dbReference>
<dbReference type="GO" id="GO:0009252">
    <property type="term" value="P:peptidoglycan biosynthetic process"/>
    <property type="evidence" value="ECO:0007669"/>
    <property type="project" value="UniProtKB-KW"/>
</dbReference>
<dbReference type="GO" id="GO:0008360">
    <property type="term" value="P:regulation of cell shape"/>
    <property type="evidence" value="ECO:0007669"/>
    <property type="project" value="UniProtKB-KW"/>
</dbReference>
<dbReference type="GO" id="GO:0046677">
    <property type="term" value="P:response to antibiotic"/>
    <property type="evidence" value="ECO:0007669"/>
    <property type="project" value="UniProtKB-UniRule"/>
</dbReference>
<dbReference type="HAMAP" id="MF_01006">
    <property type="entry name" value="Undec_diphosphatase"/>
    <property type="match status" value="1"/>
</dbReference>
<dbReference type="InterPro" id="IPR003824">
    <property type="entry name" value="UppP"/>
</dbReference>
<dbReference type="PANTHER" id="PTHR30622">
    <property type="entry name" value="UNDECAPRENYL-DIPHOSPHATASE"/>
    <property type="match status" value="1"/>
</dbReference>
<dbReference type="PANTHER" id="PTHR30622:SF4">
    <property type="entry name" value="UNDECAPRENYL-DIPHOSPHATASE"/>
    <property type="match status" value="1"/>
</dbReference>
<dbReference type="Pfam" id="PF02673">
    <property type="entry name" value="BacA"/>
    <property type="match status" value="1"/>
</dbReference>
<feature type="chain" id="PRO_0000250224" description="Undecaprenyl-diphosphatase">
    <location>
        <begin position="1"/>
        <end position="292"/>
    </location>
</feature>
<feature type="transmembrane region" description="Helical" evidence="1">
    <location>
        <begin position="1"/>
        <end position="21"/>
    </location>
</feature>
<feature type="transmembrane region" description="Helical" evidence="1">
    <location>
        <begin position="46"/>
        <end position="66"/>
    </location>
</feature>
<feature type="transmembrane region" description="Helical" evidence="1">
    <location>
        <begin position="88"/>
        <end position="108"/>
    </location>
</feature>
<feature type="transmembrane region" description="Helical" evidence="1">
    <location>
        <begin position="114"/>
        <end position="134"/>
    </location>
</feature>
<feature type="transmembrane region" description="Helical" evidence="1">
    <location>
        <begin position="192"/>
        <end position="212"/>
    </location>
</feature>
<feature type="transmembrane region" description="Helical" evidence="1">
    <location>
        <begin position="225"/>
        <end position="245"/>
    </location>
</feature>
<feature type="transmembrane region" description="Helical" evidence="1">
    <location>
        <begin position="253"/>
        <end position="273"/>
    </location>
</feature>
<proteinExistence type="inferred from homology"/>
<evidence type="ECO:0000255" key="1">
    <source>
        <dbReference type="HAMAP-Rule" id="MF_01006"/>
    </source>
</evidence>
<reference key="1">
    <citation type="submission" date="2006-01" db="EMBL/GenBank/DDBJ databases">
        <title>Complete sequence of Anaeromyxobacter dehalogenans 2CP-C.</title>
        <authorList>
            <person name="Copeland A."/>
            <person name="Lucas S."/>
            <person name="Lapidus A."/>
            <person name="Barry K."/>
            <person name="Detter J.C."/>
            <person name="Glavina T."/>
            <person name="Hammon N."/>
            <person name="Israni S."/>
            <person name="Pitluck S."/>
            <person name="Brettin T."/>
            <person name="Bruce D."/>
            <person name="Han C."/>
            <person name="Tapia R."/>
            <person name="Gilna P."/>
            <person name="Kiss H."/>
            <person name="Schmutz J."/>
            <person name="Larimer F."/>
            <person name="Land M."/>
            <person name="Kyrpides N."/>
            <person name="Anderson I."/>
            <person name="Sanford R.A."/>
            <person name="Ritalahti K.M."/>
            <person name="Thomas H.S."/>
            <person name="Kirby J.R."/>
            <person name="Zhulin I.B."/>
            <person name="Loeffler F.E."/>
            <person name="Richardson P."/>
        </authorList>
    </citation>
    <scope>NUCLEOTIDE SEQUENCE [LARGE SCALE GENOMIC DNA]</scope>
    <source>
        <strain>2CP-C</strain>
    </source>
</reference>
<protein>
    <recommendedName>
        <fullName evidence="1">Undecaprenyl-diphosphatase</fullName>
        <ecNumber evidence="1">3.6.1.27</ecNumber>
    </recommendedName>
    <alternativeName>
        <fullName evidence="1">Bacitracin resistance protein</fullName>
    </alternativeName>
    <alternativeName>
        <fullName evidence="1">Undecaprenyl pyrophosphate phosphatase</fullName>
    </alternativeName>
</protein>